<keyword id="KW-0963">Cytoplasm</keyword>
<keyword id="KW-0378">Hydrolase</keyword>
<keyword id="KW-0694">RNA-binding</keyword>
<keyword id="KW-0820">tRNA-binding</keyword>
<accession>C4ZBV8</accession>
<reference key="1">
    <citation type="journal article" date="2009" name="Proc. Natl. Acad. Sci. U.S.A.">
        <title>Characterizing a model human gut microbiota composed of members of its two dominant bacterial phyla.</title>
        <authorList>
            <person name="Mahowald M.A."/>
            <person name="Rey F.E."/>
            <person name="Seedorf H."/>
            <person name="Turnbaugh P.J."/>
            <person name="Fulton R.S."/>
            <person name="Wollam A."/>
            <person name="Shah N."/>
            <person name="Wang C."/>
            <person name="Magrini V."/>
            <person name="Wilson R.K."/>
            <person name="Cantarel B.L."/>
            <person name="Coutinho P.M."/>
            <person name="Henrissat B."/>
            <person name="Crock L.W."/>
            <person name="Russell A."/>
            <person name="Verberkmoes N.C."/>
            <person name="Hettich R.L."/>
            <person name="Gordon J.I."/>
        </authorList>
    </citation>
    <scope>NUCLEOTIDE SEQUENCE [LARGE SCALE GENOMIC DNA]</scope>
    <source>
        <strain>ATCC 33656 / DSM 3377 / JCM 17463 / KCTC 5835 / LMG 30912 / VPI 0990</strain>
    </source>
</reference>
<name>PTH_AGARV</name>
<comment type="function">
    <text evidence="1">Hydrolyzes ribosome-free peptidyl-tRNAs (with 1 or more amino acids incorporated), which drop off the ribosome during protein synthesis, or as a result of ribosome stalling.</text>
</comment>
<comment type="function">
    <text evidence="1">Catalyzes the release of premature peptidyl moieties from peptidyl-tRNA molecules trapped in stalled 50S ribosomal subunits, and thus maintains levels of free tRNAs and 50S ribosomes.</text>
</comment>
<comment type="catalytic activity">
    <reaction evidence="1">
        <text>an N-acyl-L-alpha-aminoacyl-tRNA + H2O = an N-acyl-L-amino acid + a tRNA + H(+)</text>
        <dbReference type="Rhea" id="RHEA:54448"/>
        <dbReference type="Rhea" id="RHEA-COMP:10123"/>
        <dbReference type="Rhea" id="RHEA-COMP:13883"/>
        <dbReference type="ChEBI" id="CHEBI:15377"/>
        <dbReference type="ChEBI" id="CHEBI:15378"/>
        <dbReference type="ChEBI" id="CHEBI:59874"/>
        <dbReference type="ChEBI" id="CHEBI:78442"/>
        <dbReference type="ChEBI" id="CHEBI:138191"/>
        <dbReference type="EC" id="3.1.1.29"/>
    </reaction>
</comment>
<comment type="subunit">
    <text evidence="1">Monomer.</text>
</comment>
<comment type="subcellular location">
    <subcellularLocation>
        <location evidence="1">Cytoplasm</location>
    </subcellularLocation>
</comment>
<comment type="similarity">
    <text evidence="1">Belongs to the PTH family.</text>
</comment>
<protein>
    <recommendedName>
        <fullName evidence="1">Peptidyl-tRNA hydrolase</fullName>
        <shortName evidence="1">Pth</shortName>
        <ecNumber evidence="1">3.1.1.29</ecNumber>
    </recommendedName>
</protein>
<dbReference type="EC" id="3.1.1.29" evidence="1"/>
<dbReference type="EMBL" id="CP001107">
    <property type="protein sequence ID" value="ACR74248.1"/>
    <property type="molecule type" value="Genomic_DNA"/>
</dbReference>
<dbReference type="RefSeq" id="WP_012741365.1">
    <property type="nucleotide sequence ID" value="NZ_CAXSYD010000003.1"/>
</dbReference>
<dbReference type="SMR" id="C4ZBV8"/>
<dbReference type="STRING" id="515619.EUBREC_0457"/>
<dbReference type="PaxDb" id="515619-EUBREC_0457"/>
<dbReference type="GeneID" id="86987367"/>
<dbReference type="KEGG" id="ere:EUBREC_0457"/>
<dbReference type="HOGENOM" id="CLU_062456_4_1_9"/>
<dbReference type="Proteomes" id="UP000001477">
    <property type="component" value="Chromosome"/>
</dbReference>
<dbReference type="GO" id="GO:0005737">
    <property type="term" value="C:cytoplasm"/>
    <property type="evidence" value="ECO:0007669"/>
    <property type="project" value="UniProtKB-SubCell"/>
</dbReference>
<dbReference type="GO" id="GO:0004045">
    <property type="term" value="F:peptidyl-tRNA hydrolase activity"/>
    <property type="evidence" value="ECO:0007669"/>
    <property type="project" value="UniProtKB-UniRule"/>
</dbReference>
<dbReference type="GO" id="GO:0000049">
    <property type="term" value="F:tRNA binding"/>
    <property type="evidence" value="ECO:0007669"/>
    <property type="project" value="UniProtKB-UniRule"/>
</dbReference>
<dbReference type="GO" id="GO:0006515">
    <property type="term" value="P:protein quality control for misfolded or incompletely synthesized proteins"/>
    <property type="evidence" value="ECO:0007669"/>
    <property type="project" value="UniProtKB-UniRule"/>
</dbReference>
<dbReference type="GO" id="GO:0072344">
    <property type="term" value="P:rescue of stalled ribosome"/>
    <property type="evidence" value="ECO:0007669"/>
    <property type="project" value="UniProtKB-UniRule"/>
</dbReference>
<dbReference type="CDD" id="cd00462">
    <property type="entry name" value="PTH"/>
    <property type="match status" value="1"/>
</dbReference>
<dbReference type="FunFam" id="3.40.50.1470:FF:000001">
    <property type="entry name" value="Peptidyl-tRNA hydrolase"/>
    <property type="match status" value="1"/>
</dbReference>
<dbReference type="Gene3D" id="3.40.50.1470">
    <property type="entry name" value="Peptidyl-tRNA hydrolase"/>
    <property type="match status" value="1"/>
</dbReference>
<dbReference type="HAMAP" id="MF_00083">
    <property type="entry name" value="Pept_tRNA_hydro_bact"/>
    <property type="match status" value="1"/>
</dbReference>
<dbReference type="InterPro" id="IPR001328">
    <property type="entry name" value="Pept_tRNA_hydro"/>
</dbReference>
<dbReference type="InterPro" id="IPR018171">
    <property type="entry name" value="Pept_tRNA_hydro_CS"/>
</dbReference>
<dbReference type="InterPro" id="IPR036416">
    <property type="entry name" value="Pept_tRNA_hydro_sf"/>
</dbReference>
<dbReference type="NCBIfam" id="TIGR00447">
    <property type="entry name" value="pth"/>
    <property type="match status" value="1"/>
</dbReference>
<dbReference type="PANTHER" id="PTHR17224">
    <property type="entry name" value="PEPTIDYL-TRNA HYDROLASE"/>
    <property type="match status" value="1"/>
</dbReference>
<dbReference type="PANTHER" id="PTHR17224:SF1">
    <property type="entry name" value="PEPTIDYL-TRNA HYDROLASE"/>
    <property type="match status" value="1"/>
</dbReference>
<dbReference type="Pfam" id="PF01195">
    <property type="entry name" value="Pept_tRNA_hydro"/>
    <property type="match status" value="1"/>
</dbReference>
<dbReference type="SUPFAM" id="SSF53178">
    <property type="entry name" value="Peptidyl-tRNA hydrolase-like"/>
    <property type="match status" value="1"/>
</dbReference>
<dbReference type="PROSITE" id="PS01195">
    <property type="entry name" value="PEPT_TRNA_HYDROL_1"/>
    <property type="match status" value="1"/>
</dbReference>
<dbReference type="PROSITE" id="PS01196">
    <property type="entry name" value="PEPT_TRNA_HYDROL_2"/>
    <property type="match status" value="1"/>
</dbReference>
<organism>
    <name type="scientific">Agathobacter rectalis (strain ATCC 33656 / DSM 3377 / JCM 17463 / KCTC 5835 / VPI 0990)</name>
    <name type="common">Eubacterium rectale</name>
    <dbReference type="NCBI Taxonomy" id="515619"/>
    <lineage>
        <taxon>Bacteria</taxon>
        <taxon>Bacillati</taxon>
        <taxon>Bacillota</taxon>
        <taxon>Clostridia</taxon>
        <taxon>Lachnospirales</taxon>
        <taxon>Lachnospiraceae</taxon>
        <taxon>Agathobacter</taxon>
    </lineage>
</organism>
<gene>
    <name evidence="1" type="primary">pth</name>
    <name type="ordered locus">EUBREC_0457</name>
</gene>
<sequence>MYVIVGLGNPDKKYEHTRHNIGFDVIDALADKYNISVTDKKHKALCGSGVIEGMKVLLVKPQTYMNLSGESVAEVMNFYKLDPDEEMIVIFDDISLEPGRIRIRKKGSAGGHNGIKSIIAMTGTQGFSRIKVGVGEKPQGWDLADHVLGRFSSEDRAKVEEAIGHAMDAAVLMMQGETDKAMNIYN</sequence>
<evidence type="ECO:0000255" key="1">
    <source>
        <dbReference type="HAMAP-Rule" id="MF_00083"/>
    </source>
</evidence>
<proteinExistence type="inferred from homology"/>
<feature type="chain" id="PRO_1000202583" description="Peptidyl-tRNA hydrolase">
    <location>
        <begin position="1"/>
        <end position="186"/>
    </location>
</feature>
<feature type="active site" description="Proton acceptor" evidence="1">
    <location>
        <position position="19"/>
    </location>
</feature>
<feature type="binding site" evidence="1">
    <location>
        <position position="14"/>
    </location>
    <ligand>
        <name>tRNA</name>
        <dbReference type="ChEBI" id="CHEBI:17843"/>
    </ligand>
</feature>
<feature type="binding site" evidence="1">
    <location>
        <position position="64"/>
    </location>
    <ligand>
        <name>tRNA</name>
        <dbReference type="ChEBI" id="CHEBI:17843"/>
    </ligand>
</feature>
<feature type="binding site" evidence="1">
    <location>
        <position position="66"/>
    </location>
    <ligand>
        <name>tRNA</name>
        <dbReference type="ChEBI" id="CHEBI:17843"/>
    </ligand>
</feature>
<feature type="binding site" evidence="1">
    <location>
        <position position="113"/>
    </location>
    <ligand>
        <name>tRNA</name>
        <dbReference type="ChEBI" id="CHEBI:17843"/>
    </ligand>
</feature>
<feature type="site" description="Discriminates between blocked and unblocked aminoacyl-tRNA" evidence="1">
    <location>
        <position position="9"/>
    </location>
</feature>
<feature type="site" description="Stabilizes the basic form of H active site to accept a proton" evidence="1">
    <location>
        <position position="92"/>
    </location>
</feature>